<dbReference type="EC" id="3.1.-.-" evidence="1"/>
<dbReference type="EMBL" id="AE008691">
    <property type="protein sequence ID" value="AAM23559.1"/>
    <property type="molecule type" value="Genomic_DNA"/>
</dbReference>
<dbReference type="RefSeq" id="WP_011024732.1">
    <property type="nucleotide sequence ID" value="NC_003869.1"/>
</dbReference>
<dbReference type="SMR" id="Q8RCZ1"/>
<dbReference type="STRING" id="273068.TTE0263"/>
<dbReference type="KEGG" id="tte:TTE0263"/>
<dbReference type="eggNOG" id="COG3857">
    <property type="taxonomic scope" value="Bacteria"/>
</dbReference>
<dbReference type="HOGENOM" id="CLU_007838_0_0_9"/>
<dbReference type="OrthoDB" id="9758506at2"/>
<dbReference type="Proteomes" id="UP000000555">
    <property type="component" value="Chromosome"/>
</dbReference>
<dbReference type="GO" id="GO:0051539">
    <property type="term" value="F:4 iron, 4 sulfur cluster binding"/>
    <property type="evidence" value="ECO:0007669"/>
    <property type="project" value="UniProtKB-KW"/>
</dbReference>
<dbReference type="GO" id="GO:0008409">
    <property type="term" value="F:5'-3' exonuclease activity"/>
    <property type="evidence" value="ECO:0007669"/>
    <property type="project" value="UniProtKB-UniRule"/>
</dbReference>
<dbReference type="GO" id="GO:0005524">
    <property type="term" value="F:ATP binding"/>
    <property type="evidence" value="ECO:0007669"/>
    <property type="project" value="UniProtKB-UniRule"/>
</dbReference>
<dbReference type="GO" id="GO:0003690">
    <property type="term" value="F:double-stranded DNA binding"/>
    <property type="evidence" value="ECO:0007669"/>
    <property type="project" value="UniProtKB-UniRule"/>
</dbReference>
<dbReference type="GO" id="GO:0004386">
    <property type="term" value="F:helicase activity"/>
    <property type="evidence" value="ECO:0007669"/>
    <property type="project" value="UniProtKB-KW"/>
</dbReference>
<dbReference type="GO" id="GO:0046872">
    <property type="term" value="F:metal ion binding"/>
    <property type="evidence" value="ECO:0007669"/>
    <property type="project" value="UniProtKB-KW"/>
</dbReference>
<dbReference type="GO" id="GO:0000724">
    <property type="term" value="P:double-strand break repair via homologous recombination"/>
    <property type="evidence" value="ECO:0007669"/>
    <property type="project" value="UniProtKB-UniRule"/>
</dbReference>
<dbReference type="Gene3D" id="3.90.320.10">
    <property type="match status" value="1"/>
</dbReference>
<dbReference type="Gene3D" id="6.10.140.1030">
    <property type="match status" value="1"/>
</dbReference>
<dbReference type="Gene3D" id="3.40.50.300">
    <property type="entry name" value="P-loop containing nucleotide triphosphate hydrolases"/>
    <property type="match status" value="4"/>
</dbReference>
<dbReference type="HAMAP" id="MF_01452">
    <property type="entry name" value="AddB_type1"/>
    <property type="match status" value="1"/>
</dbReference>
<dbReference type="InterPro" id="IPR049035">
    <property type="entry name" value="ADDB_N"/>
</dbReference>
<dbReference type="InterPro" id="IPR014140">
    <property type="entry name" value="DNA_helicase_suAddB"/>
</dbReference>
<dbReference type="InterPro" id="IPR027417">
    <property type="entry name" value="P-loop_NTPase"/>
</dbReference>
<dbReference type="InterPro" id="IPR011604">
    <property type="entry name" value="PDDEXK-like_dom_sf"/>
</dbReference>
<dbReference type="InterPro" id="IPR038726">
    <property type="entry name" value="PDDEXK_AddAB-type"/>
</dbReference>
<dbReference type="NCBIfam" id="TIGR02773">
    <property type="entry name" value="addB_Gpos"/>
    <property type="match status" value="1"/>
</dbReference>
<dbReference type="PANTHER" id="PTHR30591">
    <property type="entry name" value="RECBCD ENZYME SUBUNIT RECC"/>
    <property type="match status" value="1"/>
</dbReference>
<dbReference type="PANTHER" id="PTHR30591:SF1">
    <property type="entry name" value="RECBCD ENZYME SUBUNIT RECC"/>
    <property type="match status" value="1"/>
</dbReference>
<dbReference type="Pfam" id="PF21445">
    <property type="entry name" value="ADDB_N"/>
    <property type="match status" value="1"/>
</dbReference>
<dbReference type="Pfam" id="PF12705">
    <property type="entry name" value="PDDEXK_1"/>
    <property type="match status" value="1"/>
</dbReference>
<dbReference type="SUPFAM" id="SSF52540">
    <property type="entry name" value="P-loop containing nucleoside triphosphate hydrolases"/>
    <property type="match status" value="1"/>
</dbReference>
<name>ADDB_CALS4</name>
<evidence type="ECO:0000255" key="1">
    <source>
        <dbReference type="HAMAP-Rule" id="MF_01452"/>
    </source>
</evidence>
<evidence type="ECO:0000256" key="2">
    <source>
        <dbReference type="SAM" id="MobiDB-lite"/>
    </source>
</evidence>
<reference key="1">
    <citation type="journal article" date="2002" name="Genome Res.">
        <title>A complete sequence of the T. tengcongensis genome.</title>
        <authorList>
            <person name="Bao Q."/>
            <person name="Tian Y."/>
            <person name="Li W."/>
            <person name="Xu Z."/>
            <person name="Xuan Z."/>
            <person name="Hu S."/>
            <person name="Dong W."/>
            <person name="Yang J."/>
            <person name="Chen Y."/>
            <person name="Xue Y."/>
            <person name="Xu Y."/>
            <person name="Lai X."/>
            <person name="Huang L."/>
            <person name="Dong X."/>
            <person name="Ma Y."/>
            <person name="Ling L."/>
            <person name="Tan H."/>
            <person name="Chen R."/>
            <person name="Wang J."/>
            <person name="Yu J."/>
            <person name="Yang H."/>
        </authorList>
    </citation>
    <scope>NUCLEOTIDE SEQUENCE [LARGE SCALE GENOMIC DNA]</scope>
    <source>
        <strain>DSM 15242 / JCM 11007 / NBRC 100824 / MB4</strain>
    </source>
</reference>
<keyword id="KW-0004">4Fe-4S</keyword>
<keyword id="KW-0067">ATP-binding</keyword>
<keyword id="KW-0227">DNA damage</keyword>
<keyword id="KW-0234">DNA repair</keyword>
<keyword id="KW-0238">DNA-binding</keyword>
<keyword id="KW-0269">Exonuclease</keyword>
<keyword id="KW-0347">Helicase</keyword>
<keyword id="KW-0378">Hydrolase</keyword>
<keyword id="KW-0408">Iron</keyword>
<keyword id="KW-0411">Iron-sulfur</keyword>
<keyword id="KW-0479">Metal-binding</keyword>
<keyword id="KW-0540">Nuclease</keyword>
<keyword id="KW-0547">Nucleotide-binding</keyword>
<keyword id="KW-1185">Reference proteome</keyword>
<comment type="function">
    <text evidence="1">The heterodimer acts as both an ATP-dependent DNA helicase and an ATP-dependent, dual-direction single-stranded exonuclease. Recognizes the chi site generating a DNA molecule suitable for the initiation of homologous recombination. The AddB subunit has 5' -&gt; 3' nuclease activity but not helicase activity.</text>
</comment>
<comment type="cofactor">
    <cofactor evidence="1">
        <name>Mg(2+)</name>
        <dbReference type="ChEBI" id="CHEBI:18420"/>
    </cofactor>
</comment>
<comment type="cofactor">
    <cofactor evidence="1">
        <name>[4Fe-4S] cluster</name>
        <dbReference type="ChEBI" id="CHEBI:49883"/>
    </cofactor>
    <text evidence="1">Binds 1 [4Fe-4S] cluster.</text>
</comment>
<comment type="subunit">
    <text evidence="1">Heterodimer of AddA and AddB.</text>
</comment>
<comment type="miscellaneous">
    <text evidence="1">Despite having conserved helicase domains, this subunit does not have helicase activity.</text>
</comment>
<comment type="similarity">
    <text evidence="1">Belongs to the helicase family. AddB/RexB type 1 subfamily.</text>
</comment>
<sequence>MSIRFIYGRAGSGKTYFCLEEIKHKLNDGANHPLILLVPEQFTFEAEKYLLDMIERDEKMRAQVLSFKTLANRVFVEVGGLARQHMKACGKSMVIYKVLEENKEKLKVYSKASRQQGFVKKISEAITEFKRFDVTPFQLIDASEKIEKLGLKEKLEDLALIYSSFEEVLHKNYIDEEDELDLLSKKLEKSLQFEGAEFWIDGFTGFTPKQYKVIEKLLKKASRVSVTLTLDPSIDSIDPTHLFYTTKKTEEKLIKICETNGISVEEPVNLNKGIPKRFEHNKELAFLEKNFFSHPYEIYNEETKNISIFKATNMYSEVEEVARDIARLIRDEHMRYSDIVVATKDLKRYYKLVKAIFSHYGIPHFIDLKINITNNPIIVYVISIFEIYLKNWSYESVFRYLKTGFTGIDKEEINLLENYVLANGIKGNKWKERWEYRIDYKTDSLLMEEREKQIINKVNEVRERVYLPLEKFYTRFSHSKNVKEACEVLYDFLVENKLPEKIEKFIEEFKNRGEFDTANQYAQIWDIVVDVLDQMVEVLGEEKISLEQFARLISIGFDEYQIASIPPALDEVLVTSVDRMKSHNSKVLYLLGANDGVFPASSFEEGIFSDEERNLLSSLDLELDRDTKAKVFEEQFLVYTALTSASEFLKISYPIADHEGRSLRPSIIISRLRRIFPKIKVSTNIVEMDTDEENLNRVTVPLPTFNEMIKSFKKWNITGKIHPIWLEVYKWYRTKDEWKKKLEDTLEGFVYDNQIKRIPPLKIKKLYGEEMEFSVSRLEKYAACPFAYFVQYGLKAKERKIYGFEPPDLGIFMHNVLNEIAKALEKEELTWQEIDKEWCNDAVDIIVEEMVDKIPGYILKSSSRYRYLANRLKRVLSKAVWIISEHMKRSSFVPLGHEVAFGENQKYPPIKIVLSNGEEIKLIGRIDRVDVLEKEGETYVRIIDYKSGDKTLDLSDVLYGLELQLLVYLDAILESAFEGKANLSPAGIFYFKIDDPIVRADKDISDEELYKEIMKRLRLEGFVLKSLDIIREMDKLIEGTSYVIPASINKDGTIGKNTKGLTEEQFEILRKFVKKKSKKLAEEMLQGDISILPYKKEKETACQYCPYSSICKFETNFKGNDYRRIESKEEKLWSIFEEEVKEDGSQVDGRTEGSDNNEG</sequence>
<accession>Q8RCZ1</accession>
<gene>
    <name evidence="1" type="primary">addB</name>
    <name type="ordered locus">TTE0263</name>
</gene>
<organism>
    <name type="scientific">Caldanaerobacter subterraneus subsp. tengcongensis (strain DSM 15242 / JCM 11007 / NBRC 100824 / MB4)</name>
    <name type="common">Thermoanaerobacter tengcongensis</name>
    <dbReference type="NCBI Taxonomy" id="273068"/>
    <lineage>
        <taxon>Bacteria</taxon>
        <taxon>Bacillati</taxon>
        <taxon>Bacillota</taxon>
        <taxon>Clostridia</taxon>
        <taxon>Thermoanaerobacterales</taxon>
        <taxon>Thermoanaerobacteraceae</taxon>
        <taxon>Caldanaerobacter</taxon>
    </lineage>
</organism>
<feature type="chain" id="PRO_0000379226" description="ATP-dependent helicase/deoxyribonuclease subunit B">
    <location>
        <begin position="1"/>
        <end position="1159"/>
    </location>
</feature>
<feature type="region of interest" description="Disordered" evidence="2">
    <location>
        <begin position="1140"/>
        <end position="1159"/>
    </location>
</feature>
<feature type="binding site" evidence="1">
    <location>
        <begin position="8"/>
        <end position="15"/>
    </location>
    <ligand>
        <name>ATP</name>
        <dbReference type="ChEBI" id="CHEBI:30616"/>
    </ligand>
</feature>
<feature type="binding site" evidence="1">
    <location>
        <position position="784"/>
    </location>
    <ligand>
        <name>[4Fe-4S] cluster</name>
        <dbReference type="ChEBI" id="CHEBI:49883"/>
    </ligand>
</feature>
<feature type="binding site" evidence="1">
    <location>
        <position position="1102"/>
    </location>
    <ligand>
        <name>[4Fe-4S] cluster</name>
        <dbReference type="ChEBI" id="CHEBI:49883"/>
    </ligand>
</feature>
<feature type="binding site" evidence="1">
    <location>
        <position position="1105"/>
    </location>
    <ligand>
        <name>[4Fe-4S] cluster</name>
        <dbReference type="ChEBI" id="CHEBI:49883"/>
    </ligand>
</feature>
<feature type="binding site" evidence="1">
    <location>
        <position position="1111"/>
    </location>
    <ligand>
        <name>[4Fe-4S] cluster</name>
        <dbReference type="ChEBI" id="CHEBI:49883"/>
    </ligand>
</feature>
<protein>
    <recommendedName>
        <fullName evidence="1">ATP-dependent helicase/deoxyribonuclease subunit B</fullName>
        <ecNumber evidence="1">3.1.-.-</ecNumber>
    </recommendedName>
    <alternativeName>
        <fullName evidence="1">ATP-dependent helicase/nuclease subunit AddB</fullName>
    </alternativeName>
</protein>
<proteinExistence type="inferred from homology"/>